<feature type="chain" id="PRO_0000050400" description="Hexose transporter HXT10">
    <location>
        <begin position="1"/>
        <end position="546"/>
    </location>
</feature>
<feature type="topological domain" description="Cytoplasmic" evidence="1">
    <location>
        <begin position="1"/>
        <end position="44"/>
    </location>
</feature>
<feature type="transmembrane region" description="Helical; Name=1" evidence="1">
    <location>
        <begin position="45"/>
        <end position="65"/>
    </location>
</feature>
<feature type="topological domain" description="Extracellular" evidence="1">
    <location>
        <begin position="66"/>
        <end position="100"/>
    </location>
</feature>
<feature type="transmembrane region" description="Helical; Name=2" evidence="1">
    <location>
        <begin position="101"/>
        <end position="121"/>
    </location>
</feature>
<feature type="topological domain" description="Cytoplasmic" evidence="1">
    <location>
        <begin position="122"/>
        <end position="127"/>
    </location>
</feature>
<feature type="transmembrane region" description="Helical; Name=3" evidence="1">
    <location>
        <begin position="128"/>
        <end position="148"/>
    </location>
</feature>
<feature type="topological domain" description="Extracellular" evidence="1">
    <location>
        <begin position="149"/>
        <end position="158"/>
    </location>
</feature>
<feature type="transmembrane region" description="Helical; Name=4" evidence="1">
    <location>
        <begin position="159"/>
        <end position="179"/>
    </location>
</feature>
<feature type="topological domain" description="Cytoplasmic" evidence="1">
    <location>
        <begin position="180"/>
        <end position="185"/>
    </location>
</feature>
<feature type="transmembrane region" description="Helical; Name=5" evidence="1">
    <location>
        <begin position="186"/>
        <end position="206"/>
    </location>
</feature>
<feature type="topological domain" description="Extracellular" evidence="1">
    <location>
        <begin position="207"/>
        <end position="220"/>
    </location>
</feature>
<feature type="transmembrane region" description="Helical; Name=6" evidence="1">
    <location>
        <begin position="221"/>
        <end position="241"/>
    </location>
</feature>
<feature type="topological domain" description="Cytoplasmic" evidence="1">
    <location>
        <begin position="242"/>
        <end position="324"/>
    </location>
</feature>
<feature type="transmembrane region" description="Helical; Name=7" evidence="1">
    <location>
        <begin position="325"/>
        <end position="341"/>
    </location>
</feature>
<feature type="topological domain" description="Extracellular" evidence="1">
    <location>
        <begin position="342"/>
        <end position="347"/>
    </location>
</feature>
<feature type="transmembrane region" description="Helical; Name=8" evidence="1">
    <location>
        <begin position="348"/>
        <end position="365"/>
    </location>
</feature>
<feature type="topological domain" description="Cytoplasmic" evidence="1">
    <location>
        <begin position="366"/>
        <end position="372"/>
    </location>
</feature>
<feature type="transmembrane region" description="Helical; Name=9" evidence="1">
    <location>
        <begin position="373"/>
        <end position="393"/>
    </location>
</feature>
<feature type="topological domain" description="Extracellular" evidence="1">
    <location>
        <begin position="394"/>
        <end position="415"/>
    </location>
</feature>
<feature type="transmembrane region" description="Helical; Name=10" evidence="1">
    <location>
        <begin position="416"/>
        <end position="436"/>
    </location>
</feature>
<feature type="topological domain" description="Cytoplasmic" evidence="1">
    <location>
        <begin position="437"/>
        <end position="453"/>
    </location>
</feature>
<feature type="transmembrane region" description="Helical; Name=11" evidence="1">
    <location>
        <begin position="454"/>
        <end position="474"/>
    </location>
</feature>
<feature type="topological domain" description="Extracellular" evidence="1">
    <location>
        <position position="475"/>
    </location>
</feature>
<feature type="transmembrane region" description="Helical; Name=12" evidence="1">
    <location>
        <begin position="476"/>
        <end position="496"/>
    </location>
</feature>
<feature type="topological domain" description="Cytoplasmic" evidence="1">
    <location>
        <begin position="497"/>
        <end position="546"/>
    </location>
</feature>
<feature type="glycosylation site" description="N-linked (GlcNAc...) asparagine" evidence="1">
    <location>
        <position position="75"/>
    </location>
</feature>
<gene>
    <name type="primary">HXT10</name>
    <name type="ordered locus">YFL011W</name>
</gene>
<name>HXT10_YEAST</name>
<sequence length="546" mass="60662">MVSSSVSILGTSAKASTSLSRKDEIKLTPETREASLDIPYKPIIAYWTVMGLCLMIAFGGFIFGWDTGTISGFINQTDFKRRFGELQRDGSFQLSDVRTGLIVGIFNIGCALGGLTLGRLGDIYGRKIGLMCVILVYVVGIVIQIASSDKWYQYFIGRIVSGMGVGGVAVLSPTLISEISPKHLRGTCVSFYQLMITLGIFLGYCTNYGTKKYSNSIQWRVPLGLCFAWAIFMVIGMVMVPESPRYLVEKGKYEEARRSLAKSNKVTVTDPGVVFEFDTIVANMELERAVGNASWHELFSNKGAILPRVIMGIVIQSLQQLTGCNYFFYYGTTIFNAVGMQDSFETSIVLGAVNFASTFVALYIVDKFGRRKCLLWGSASMAICFVIFATVGVTRLWPQGKDQPSSQSAGNVMIVFTCFFIFSFAITWAPIAYVIVAETYPLRVKNRAMAIAVGANWMWGFLIGFFTPFITRSIGFSYGYVFMGCLIFSYFYVFFFVCETKGLTLEEVNEMYEERIKPWKSGGWIPSSRRTPQPTSSTPLVIVDSK</sequence>
<dbReference type="EMBL" id="D50617">
    <property type="protein sequence ID" value="BAA09227.1"/>
    <property type="molecule type" value="Genomic_DNA"/>
</dbReference>
<dbReference type="EMBL" id="Z46255">
    <property type="protein sequence ID" value="CAA86344.1"/>
    <property type="molecule type" value="Genomic_DNA"/>
</dbReference>
<dbReference type="EMBL" id="BK006940">
    <property type="protein sequence ID" value="DAA12428.1"/>
    <property type="molecule type" value="Genomic_DNA"/>
</dbReference>
<dbReference type="PIR" id="S48313">
    <property type="entry name" value="S48313"/>
</dbReference>
<dbReference type="RefSeq" id="NP_116644.1">
    <property type="nucleotide sequence ID" value="NM_001179955.1"/>
</dbReference>
<dbReference type="SMR" id="P43581"/>
<dbReference type="BioGRID" id="31135">
    <property type="interactions" value="65"/>
</dbReference>
<dbReference type="DIP" id="DIP-5424N"/>
<dbReference type="FunCoup" id="P43581">
    <property type="interactions" value="1467"/>
</dbReference>
<dbReference type="IntAct" id="P43581">
    <property type="interactions" value="1"/>
</dbReference>
<dbReference type="STRING" id="4932.YFL011W"/>
<dbReference type="TCDB" id="2.A.1.1.5">
    <property type="family name" value="the major facilitator superfamily (mfs)"/>
</dbReference>
<dbReference type="GlyCosmos" id="P43581">
    <property type="glycosylation" value="1 site, No reported glycans"/>
</dbReference>
<dbReference type="GlyGen" id="P43581">
    <property type="glycosylation" value="2 sites"/>
</dbReference>
<dbReference type="iPTMnet" id="P43581"/>
<dbReference type="PaxDb" id="4932-YFL011W"/>
<dbReference type="PeptideAtlas" id="P43581"/>
<dbReference type="EnsemblFungi" id="YFL011W_mRNA">
    <property type="protein sequence ID" value="YFL011W"/>
    <property type="gene ID" value="YFL011W"/>
</dbReference>
<dbReference type="GeneID" id="850536"/>
<dbReference type="KEGG" id="sce:YFL011W"/>
<dbReference type="AGR" id="SGD:S000001883"/>
<dbReference type="SGD" id="S000001883">
    <property type="gene designation" value="HXT10"/>
</dbReference>
<dbReference type="VEuPathDB" id="FungiDB:YFL011W"/>
<dbReference type="eggNOG" id="KOG0254">
    <property type="taxonomic scope" value="Eukaryota"/>
</dbReference>
<dbReference type="GeneTree" id="ENSGT00940000176280"/>
<dbReference type="HOGENOM" id="CLU_001265_30_1_1"/>
<dbReference type="InParanoid" id="P43581"/>
<dbReference type="OMA" id="GWCSITF"/>
<dbReference type="OrthoDB" id="5141738at2759"/>
<dbReference type="BioCyc" id="YEAST:G3O-30445-MONOMER"/>
<dbReference type="BioGRID-ORCS" id="850536">
    <property type="hits" value="5 hits in 10 CRISPR screens"/>
</dbReference>
<dbReference type="PRO" id="PR:P43581"/>
<dbReference type="Proteomes" id="UP000002311">
    <property type="component" value="Chromosome VI"/>
</dbReference>
<dbReference type="RNAct" id="P43581">
    <property type="molecule type" value="protein"/>
</dbReference>
<dbReference type="GO" id="GO:0071944">
    <property type="term" value="C:cell periphery"/>
    <property type="evidence" value="ECO:0007005"/>
    <property type="project" value="SGD"/>
</dbReference>
<dbReference type="GO" id="GO:0000324">
    <property type="term" value="C:fungal-type vacuole"/>
    <property type="evidence" value="ECO:0007005"/>
    <property type="project" value="SGD"/>
</dbReference>
<dbReference type="GO" id="GO:0005739">
    <property type="term" value="C:mitochondrion"/>
    <property type="evidence" value="ECO:0007005"/>
    <property type="project" value="SGD"/>
</dbReference>
<dbReference type="GO" id="GO:0005886">
    <property type="term" value="C:plasma membrane"/>
    <property type="evidence" value="ECO:0000318"/>
    <property type="project" value="GO_Central"/>
</dbReference>
<dbReference type="GO" id="GO:0005351">
    <property type="term" value="F:carbohydrate:proton symporter activity"/>
    <property type="evidence" value="ECO:0000318"/>
    <property type="project" value="GO_Central"/>
</dbReference>
<dbReference type="GO" id="GO:0055056">
    <property type="term" value="F:D-glucose transmembrane transporter activity"/>
    <property type="evidence" value="ECO:0000315"/>
    <property type="project" value="SGD"/>
</dbReference>
<dbReference type="GO" id="GO:0005353">
    <property type="term" value="F:fructose transmembrane transporter activity"/>
    <property type="evidence" value="ECO:0000315"/>
    <property type="project" value="SGD"/>
</dbReference>
<dbReference type="GO" id="GO:0005354">
    <property type="term" value="F:galactose transmembrane transporter activity"/>
    <property type="evidence" value="ECO:0000315"/>
    <property type="project" value="SGD"/>
</dbReference>
<dbReference type="GO" id="GO:0015578">
    <property type="term" value="F:mannose transmembrane transporter activity"/>
    <property type="evidence" value="ECO:0000315"/>
    <property type="project" value="SGD"/>
</dbReference>
<dbReference type="GO" id="GO:0008643">
    <property type="term" value="P:carbohydrate transport"/>
    <property type="evidence" value="ECO:0000318"/>
    <property type="project" value="GO_Central"/>
</dbReference>
<dbReference type="GO" id="GO:0008645">
    <property type="term" value="P:hexose transmembrane transport"/>
    <property type="evidence" value="ECO:0000315"/>
    <property type="project" value="SGD"/>
</dbReference>
<dbReference type="CDD" id="cd17356">
    <property type="entry name" value="MFS_HXT"/>
    <property type="match status" value="1"/>
</dbReference>
<dbReference type="FunFam" id="1.20.1250.20:FF:000044">
    <property type="entry name" value="Hexose transporter Hxt3p"/>
    <property type="match status" value="1"/>
</dbReference>
<dbReference type="Gene3D" id="1.20.1250.20">
    <property type="entry name" value="MFS general substrate transporter like domains"/>
    <property type="match status" value="1"/>
</dbReference>
<dbReference type="InterPro" id="IPR020846">
    <property type="entry name" value="MFS_dom"/>
</dbReference>
<dbReference type="InterPro" id="IPR005828">
    <property type="entry name" value="MFS_sugar_transport-like"/>
</dbReference>
<dbReference type="InterPro" id="IPR050360">
    <property type="entry name" value="MFS_Sugar_Transporters"/>
</dbReference>
<dbReference type="InterPro" id="IPR036259">
    <property type="entry name" value="MFS_trans_sf"/>
</dbReference>
<dbReference type="InterPro" id="IPR003663">
    <property type="entry name" value="Sugar/inositol_transpt"/>
</dbReference>
<dbReference type="InterPro" id="IPR005829">
    <property type="entry name" value="Sugar_transporter_CS"/>
</dbReference>
<dbReference type="NCBIfam" id="TIGR00879">
    <property type="entry name" value="SP"/>
    <property type="match status" value="1"/>
</dbReference>
<dbReference type="PANTHER" id="PTHR48022:SF75">
    <property type="entry name" value="GALACTOSE TRANSPORTER-RELATED"/>
    <property type="match status" value="1"/>
</dbReference>
<dbReference type="PANTHER" id="PTHR48022">
    <property type="entry name" value="PLASTIDIC GLUCOSE TRANSPORTER 4"/>
    <property type="match status" value="1"/>
</dbReference>
<dbReference type="Pfam" id="PF00083">
    <property type="entry name" value="Sugar_tr"/>
    <property type="match status" value="1"/>
</dbReference>
<dbReference type="PRINTS" id="PR00171">
    <property type="entry name" value="SUGRTRNSPORT"/>
</dbReference>
<dbReference type="SUPFAM" id="SSF103473">
    <property type="entry name" value="MFS general substrate transporter"/>
    <property type="match status" value="1"/>
</dbReference>
<dbReference type="PROSITE" id="PS50850">
    <property type="entry name" value="MFS"/>
    <property type="match status" value="1"/>
</dbReference>
<dbReference type="PROSITE" id="PS00216">
    <property type="entry name" value="SUGAR_TRANSPORT_1"/>
    <property type="match status" value="1"/>
</dbReference>
<dbReference type="PROSITE" id="PS00217">
    <property type="entry name" value="SUGAR_TRANSPORT_2"/>
    <property type="match status" value="1"/>
</dbReference>
<comment type="function">
    <text>Probable glucose transporter.</text>
</comment>
<comment type="interaction">
    <interactant intactId="EBI-8750">
        <id>P43581</id>
    </interactant>
    <interactant intactId="EBI-8659">
        <id>P02829</id>
        <label>HSP82</label>
    </interactant>
    <organismsDiffer>false</organismsDiffer>
    <experiments>2</experiments>
</comment>
<comment type="subcellular location">
    <subcellularLocation>
        <location>Membrane</location>
        <topology>Multi-pass membrane protein</topology>
    </subcellularLocation>
</comment>
<comment type="similarity">
    <text evidence="2">Belongs to the major facilitator superfamily. Sugar transporter (TC 2.A.1.1) family.</text>
</comment>
<evidence type="ECO:0000255" key="1"/>
<evidence type="ECO:0000305" key="2"/>
<accession>P43581</accession>
<accession>D6VTL8</accession>
<proteinExistence type="evidence at protein level"/>
<reference key="1">
    <citation type="journal article" date="1995" name="Nat. Genet.">
        <title>Analysis of the nucleotide sequence of chromosome VI from Saccharomyces cerevisiae.</title>
        <authorList>
            <person name="Murakami Y."/>
            <person name="Naitou M."/>
            <person name="Hagiwara H."/>
            <person name="Shibata T."/>
            <person name="Ozawa M."/>
            <person name="Sasanuma S."/>
            <person name="Sasanuma M."/>
            <person name="Tsuchiya Y."/>
            <person name="Soeda E."/>
            <person name="Yokoyama K."/>
            <person name="Yamazaki M."/>
            <person name="Tashiro H."/>
            <person name="Eki T."/>
        </authorList>
    </citation>
    <scope>NUCLEOTIDE SEQUENCE [LARGE SCALE GENOMIC DNA]</scope>
    <source>
        <strain>ATCC 204508 / S288c</strain>
    </source>
</reference>
<reference key="2">
    <citation type="journal article" date="2014" name="G3 (Bethesda)">
        <title>The reference genome sequence of Saccharomyces cerevisiae: Then and now.</title>
        <authorList>
            <person name="Engel S.R."/>
            <person name="Dietrich F.S."/>
            <person name="Fisk D.G."/>
            <person name="Binkley G."/>
            <person name="Balakrishnan R."/>
            <person name="Costanzo M.C."/>
            <person name="Dwight S.S."/>
            <person name="Hitz B.C."/>
            <person name="Karra K."/>
            <person name="Nash R.S."/>
            <person name="Weng S."/>
            <person name="Wong E.D."/>
            <person name="Lloyd P."/>
            <person name="Skrzypek M.S."/>
            <person name="Miyasato S.R."/>
            <person name="Simison M."/>
            <person name="Cherry J.M."/>
        </authorList>
    </citation>
    <scope>GENOME REANNOTATION</scope>
    <source>
        <strain>ATCC 204508 / S288c</strain>
    </source>
</reference>
<reference key="3">
    <citation type="submission" date="1994-09" db="EMBL/GenBank/DDBJ databases">
        <authorList>
            <person name="Barrell B.G."/>
            <person name="Churcher C."/>
            <person name="Rajandream M.A."/>
        </authorList>
    </citation>
    <scope>NUCLEOTIDE SEQUENCE [GENOMIC DNA]</scope>
    <source>
        <strain>ATCC 204511 / S288c / AB972</strain>
    </source>
</reference>
<reference key="4">
    <citation type="journal article" date="2006" name="Proc. Natl. Acad. Sci. U.S.A.">
        <title>A global topology map of the Saccharomyces cerevisiae membrane proteome.</title>
        <authorList>
            <person name="Kim H."/>
            <person name="Melen K."/>
            <person name="Oesterberg M."/>
            <person name="von Heijne G."/>
        </authorList>
    </citation>
    <scope>TOPOLOGY [LARGE SCALE ANALYSIS]</scope>
    <source>
        <strain>ATCC 208353 / W303-1A</strain>
    </source>
</reference>
<protein>
    <recommendedName>
        <fullName>Hexose transporter HXT10</fullName>
    </recommendedName>
</protein>
<organism>
    <name type="scientific">Saccharomyces cerevisiae (strain ATCC 204508 / S288c)</name>
    <name type="common">Baker's yeast</name>
    <dbReference type="NCBI Taxonomy" id="559292"/>
    <lineage>
        <taxon>Eukaryota</taxon>
        <taxon>Fungi</taxon>
        <taxon>Dikarya</taxon>
        <taxon>Ascomycota</taxon>
        <taxon>Saccharomycotina</taxon>
        <taxon>Saccharomycetes</taxon>
        <taxon>Saccharomycetales</taxon>
        <taxon>Saccharomycetaceae</taxon>
        <taxon>Saccharomyces</taxon>
    </lineage>
</organism>
<keyword id="KW-0325">Glycoprotein</keyword>
<keyword id="KW-0472">Membrane</keyword>
<keyword id="KW-1185">Reference proteome</keyword>
<keyword id="KW-0677">Repeat</keyword>
<keyword id="KW-0762">Sugar transport</keyword>
<keyword id="KW-0812">Transmembrane</keyword>
<keyword id="KW-1133">Transmembrane helix</keyword>
<keyword id="KW-0813">Transport</keyword>